<accession>Q0WQD2</accession>
<accession>F4JTM1</accession>
<accession>Q9SVF8</accession>
<keyword id="KW-0025">Alternative splicing</keyword>
<keyword id="KW-0961">Cell wall biogenesis/degradation</keyword>
<keyword id="KW-0325">Glycoprotein</keyword>
<keyword id="KW-0328">Glycosyltransferase</keyword>
<keyword id="KW-0333">Golgi apparatus</keyword>
<keyword id="KW-0472">Membrane</keyword>
<keyword id="KW-1185">Reference proteome</keyword>
<keyword id="KW-0735">Signal-anchor</keyword>
<keyword id="KW-0808">Transferase</keyword>
<keyword id="KW-0812">Transmembrane</keyword>
<keyword id="KW-1133">Transmembrane helix</keyword>
<evidence type="ECO:0000250" key="1"/>
<evidence type="ECO:0000255" key="2"/>
<evidence type="ECO:0000256" key="3">
    <source>
        <dbReference type="SAM" id="MobiDB-lite"/>
    </source>
</evidence>
<evidence type="ECO:0000269" key="4">
    <source>
    </source>
</evidence>
<evidence type="ECO:0000305" key="5"/>
<sequence>MTTFSTCAAFLSLVVVLHAVHVGGAILESQAPHRELKAYRPLQDNNLQEVYASSAAAVHYDPDLKDVNIVATYSDHYGNIRLGRVKMGDLSPSWVLENPAYQVSRKTKGSQLVIPRDSFQNDTGMEDNASHSTTNQTDESENQFPNVDFASPAKLKRQILRQERRGQRTLELIRQEKETDEQMQEAAIQKSMSFENSVIGKYSIWRRDYESPNADAILKLMRDQIIMAKAYANIAKSKNVTNLYVFLMQQCGENKRVIGKATSDADLPSSALDQAKAMGHALSLAKDELYDCHELAKKFRAILQSTERKVDGLKKKGTFLIQLAAKTFPKPLHCLSLQLAADYFILGFNEEDAVKEDVSQKKLEDPSLYHYAIFSDNVLATSVVVNSTVLNAKEPQRHVFHIVTDKLNFGAMKMWFRINAPADATIQVENINDFKWLNSSYCSVLRQLESARLKEYYFKANHPSSISAGADNLKYRNPKYLSMLNHLRFYLPEVYPKLEKILFLDDDIVVQKDLAPLWEIDMQGKVNGAVETCKESFHRFDKYLNFSNPKISENFDAGACGWAFGMNMFDLKEWRKRNITGIYHYWQDLNEDRTLWKLGSLPPGLITFYNLTYAMDRSWHVLGLGYDPALNQTAIENAAVVHYNGNYKPWLGLAFAKYKPYWSKYVEYDNPYLRRCDINE</sequence>
<comment type="function">
    <text evidence="1">May be involved in pectin and/or xylans biosynthesis in cell walls.</text>
</comment>
<comment type="pathway">
    <text>Glycan metabolism; pectin biosynthesis.</text>
</comment>
<comment type="subcellular location">
    <subcellularLocation>
        <location evidence="1">Golgi apparatus membrane</location>
        <topology evidence="1">Single-pass type II membrane protein</topology>
    </subcellularLocation>
</comment>
<comment type="alternative products">
    <event type="alternative splicing"/>
    <isoform>
        <id>Q0WQD2-1</id>
        <name>1</name>
        <sequence type="displayed"/>
    </isoform>
    <text>A number of isoforms are produced. According to EST sequences.</text>
</comment>
<comment type="tissue specificity">
    <text evidence="4">Expressed in roots, inflorescences, siliques, leaves and stems.</text>
</comment>
<comment type="disruption phenotype">
    <text evidence="4">No changes in the cell wall content.</text>
</comment>
<comment type="similarity">
    <text evidence="5">Belongs to the glycosyltransferase 8 family.</text>
</comment>
<comment type="sequence caution" evidence="5">
    <conflict type="erroneous gene model prediction">
        <sequence resource="EMBL-CDS" id="CAB37483"/>
    </conflict>
</comment>
<comment type="sequence caution" evidence="5">
    <conflict type="erroneous gene model prediction">
        <sequence resource="EMBL-CDS" id="CAB80492"/>
    </conflict>
</comment>
<organism>
    <name type="scientific">Arabidopsis thaliana</name>
    <name type="common">Mouse-ear cress</name>
    <dbReference type="NCBI Taxonomy" id="3702"/>
    <lineage>
        <taxon>Eukaryota</taxon>
        <taxon>Viridiplantae</taxon>
        <taxon>Streptophyta</taxon>
        <taxon>Embryophyta</taxon>
        <taxon>Tracheophyta</taxon>
        <taxon>Spermatophyta</taxon>
        <taxon>Magnoliopsida</taxon>
        <taxon>eudicotyledons</taxon>
        <taxon>Gunneridae</taxon>
        <taxon>Pentapetalae</taxon>
        <taxon>rosids</taxon>
        <taxon>malvids</taxon>
        <taxon>Brassicales</taxon>
        <taxon>Brassicaceae</taxon>
        <taxon>Camelineae</taxon>
        <taxon>Arabidopsis</taxon>
    </lineage>
</organism>
<reference key="1">
    <citation type="journal article" date="1999" name="Nature">
        <title>Sequence and analysis of chromosome 4 of the plant Arabidopsis thaliana.</title>
        <authorList>
            <person name="Mayer K.F.X."/>
            <person name="Schueller C."/>
            <person name="Wambutt R."/>
            <person name="Murphy G."/>
            <person name="Volckaert G."/>
            <person name="Pohl T."/>
            <person name="Duesterhoeft A."/>
            <person name="Stiekema W."/>
            <person name="Entian K.-D."/>
            <person name="Terryn N."/>
            <person name="Harris B."/>
            <person name="Ansorge W."/>
            <person name="Brandt P."/>
            <person name="Grivell L.A."/>
            <person name="Rieger M."/>
            <person name="Weichselgartner M."/>
            <person name="de Simone V."/>
            <person name="Obermaier B."/>
            <person name="Mache R."/>
            <person name="Mueller M."/>
            <person name="Kreis M."/>
            <person name="Delseny M."/>
            <person name="Puigdomenech P."/>
            <person name="Watson M."/>
            <person name="Schmidtheini T."/>
            <person name="Reichert B."/>
            <person name="Portetelle D."/>
            <person name="Perez-Alonso M."/>
            <person name="Boutry M."/>
            <person name="Bancroft I."/>
            <person name="Vos P."/>
            <person name="Hoheisel J."/>
            <person name="Zimmermann W."/>
            <person name="Wedler H."/>
            <person name="Ridley P."/>
            <person name="Langham S.-A."/>
            <person name="McCullagh B."/>
            <person name="Bilham L."/>
            <person name="Robben J."/>
            <person name="van der Schueren J."/>
            <person name="Grymonprez B."/>
            <person name="Chuang Y.-J."/>
            <person name="Vandenbussche F."/>
            <person name="Braeken M."/>
            <person name="Weltjens I."/>
            <person name="Voet M."/>
            <person name="Bastiaens I."/>
            <person name="Aert R."/>
            <person name="Defoor E."/>
            <person name="Weitzenegger T."/>
            <person name="Bothe G."/>
            <person name="Ramsperger U."/>
            <person name="Hilbert H."/>
            <person name="Braun M."/>
            <person name="Holzer E."/>
            <person name="Brandt A."/>
            <person name="Peters S."/>
            <person name="van Staveren M."/>
            <person name="Dirkse W."/>
            <person name="Mooijman P."/>
            <person name="Klein Lankhorst R."/>
            <person name="Rose M."/>
            <person name="Hauf J."/>
            <person name="Koetter P."/>
            <person name="Berneiser S."/>
            <person name="Hempel S."/>
            <person name="Feldpausch M."/>
            <person name="Lamberth S."/>
            <person name="Van den Daele H."/>
            <person name="De Keyser A."/>
            <person name="Buysshaert C."/>
            <person name="Gielen J."/>
            <person name="Villarroel R."/>
            <person name="De Clercq R."/>
            <person name="van Montagu M."/>
            <person name="Rogers J."/>
            <person name="Cronin A."/>
            <person name="Quail M.A."/>
            <person name="Bray-Allen S."/>
            <person name="Clark L."/>
            <person name="Doggett J."/>
            <person name="Hall S."/>
            <person name="Kay M."/>
            <person name="Lennard N."/>
            <person name="McLay K."/>
            <person name="Mayes R."/>
            <person name="Pettett A."/>
            <person name="Rajandream M.A."/>
            <person name="Lyne M."/>
            <person name="Benes V."/>
            <person name="Rechmann S."/>
            <person name="Borkova D."/>
            <person name="Bloecker H."/>
            <person name="Scharfe M."/>
            <person name="Grimm M."/>
            <person name="Loehnert T.-H."/>
            <person name="Dose S."/>
            <person name="de Haan M."/>
            <person name="Maarse A.C."/>
            <person name="Schaefer M."/>
            <person name="Mueller-Auer S."/>
            <person name="Gabel C."/>
            <person name="Fuchs M."/>
            <person name="Fartmann B."/>
            <person name="Granderath K."/>
            <person name="Dauner D."/>
            <person name="Herzl A."/>
            <person name="Neumann S."/>
            <person name="Argiriou A."/>
            <person name="Vitale D."/>
            <person name="Liguori R."/>
            <person name="Piravandi E."/>
            <person name="Massenet O."/>
            <person name="Quigley F."/>
            <person name="Clabauld G."/>
            <person name="Muendlein A."/>
            <person name="Felber R."/>
            <person name="Schnabl S."/>
            <person name="Hiller R."/>
            <person name="Schmidt W."/>
            <person name="Lecharny A."/>
            <person name="Aubourg S."/>
            <person name="Chefdor F."/>
            <person name="Cooke R."/>
            <person name="Berger C."/>
            <person name="Monfort A."/>
            <person name="Casacuberta E."/>
            <person name="Gibbons T."/>
            <person name="Weber N."/>
            <person name="Vandenbol M."/>
            <person name="Bargues M."/>
            <person name="Terol J."/>
            <person name="Torres A."/>
            <person name="Perez-Perez A."/>
            <person name="Purnelle B."/>
            <person name="Bent E."/>
            <person name="Johnson S."/>
            <person name="Tacon D."/>
            <person name="Jesse T."/>
            <person name="Heijnen L."/>
            <person name="Schwarz S."/>
            <person name="Scholler P."/>
            <person name="Heber S."/>
            <person name="Francs P."/>
            <person name="Bielke C."/>
            <person name="Frishman D."/>
            <person name="Haase D."/>
            <person name="Lemcke K."/>
            <person name="Mewes H.-W."/>
            <person name="Stocker S."/>
            <person name="Zaccaria P."/>
            <person name="Bevan M."/>
            <person name="Wilson R.K."/>
            <person name="de la Bastide M."/>
            <person name="Habermann K."/>
            <person name="Parnell L."/>
            <person name="Dedhia N."/>
            <person name="Gnoj L."/>
            <person name="Schutz K."/>
            <person name="Huang E."/>
            <person name="Spiegel L."/>
            <person name="Sekhon M."/>
            <person name="Murray J."/>
            <person name="Sheet P."/>
            <person name="Cordes M."/>
            <person name="Abu-Threideh J."/>
            <person name="Stoneking T."/>
            <person name="Kalicki J."/>
            <person name="Graves T."/>
            <person name="Harmon G."/>
            <person name="Edwards J."/>
            <person name="Latreille P."/>
            <person name="Courtney L."/>
            <person name="Cloud J."/>
            <person name="Abbott A."/>
            <person name="Scott K."/>
            <person name="Johnson D."/>
            <person name="Minx P."/>
            <person name="Bentley D."/>
            <person name="Fulton B."/>
            <person name="Miller N."/>
            <person name="Greco T."/>
            <person name="Kemp K."/>
            <person name="Kramer J."/>
            <person name="Fulton L."/>
            <person name="Mardis E."/>
            <person name="Dante M."/>
            <person name="Pepin K."/>
            <person name="Hillier L.W."/>
            <person name="Nelson J."/>
            <person name="Spieth J."/>
            <person name="Ryan E."/>
            <person name="Andrews S."/>
            <person name="Geisel C."/>
            <person name="Layman D."/>
            <person name="Du H."/>
            <person name="Ali J."/>
            <person name="Berghoff A."/>
            <person name="Jones K."/>
            <person name="Drone K."/>
            <person name="Cotton M."/>
            <person name="Joshu C."/>
            <person name="Antonoiu B."/>
            <person name="Zidanic M."/>
            <person name="Strong C."/>
            <person name="Sun H."/>
            <person name="Lamar B."/>
            <person name="Yordan C."/>
            <person name="Ma P."/>
            <person name="Zhong J."/>
            <person name="Preston R."/>
            <person name="Vil D."/>
            <person name="Shekher M."/>
            <person name="Matero A."/>
            <person name="Shah R."/>
            <person name="Swaby I.K."/>
            <person name="O'Shaughnessy A."/>
            <person name="Rodriguez M."/>
            <person name="Hoffman J."/>
            <person name="Till S."/>
            <person name="Granat S."/>
            <person name="Shohdy N."/>
            <person name="Hasegawa A."/>
            <person name="Hameed A."/>
            <person name="Lodhi M."/>
            <person name="Johnson A."/>
            <person name="Chen E."/>
            <person name="Marra M.A."/>
            <person name="Martienssen R."/>
            <person name="McCombie W.R."/>
        </authorList>
    </citation>
    <scope>NUCLEOTIDE SEQUENCE [LARGE SCALE GENOMIC DNA]</scope>
    <source>
        <strain>cv. Columbia</strain>
    </source>
</reference>
<reference key="2">
    <citation type="journal article" date="2017" name="Plant J.">
        <title>Araport11: a complete reannotation of the Arabidopsis thaliana reference genome.</title>
        <authorList>
            <person name="Cheng C.Y."/>
            <person name="Krishnakumar V."/>
            <person name="Chan A.P."/>
            <person name="Thibaud-Nissen F."/>
            <person name="Schobel S."/>
            <person name="Town C.D."/>
        </authorList>
    </citation>
    <scope>GENOME REANNOTATION</scope>
    <source>
        <strain>cv. Columbia</strain>
    </source>
</reference>
<reference key="3">
    <citation type="submission" date="2006-07" db="EMBL/GenBank/DDBJ databases">
        <title>Large-scale analysis of RIKEN Arabidopsis full-length (RAFL) cDNAs.</title>
        <authorList>
            <person name="Totoki Y."/>
            <person name="Seki M."/>
            <person name="Ishida J."/>
            <person name="Nakajima M."/>
            <person name="Enju A."/>
            <person name="Kamiya A."/>
            <person name="Narusaka M."/>
            <person name="Shin-i T."/>
            <person name="Nakagawa M."/>
            <person name="Sakamoto N."/>
            <person name="Oishi K."/>
            <person name="Kohara Y."/>
            <person name="Kobayashi M."/>
            <person name="Toyoda A."/>
            <person name="Sakaki Y."/>
            <person name="Sakurai T."/>
            <person name="Iida K."/>
            <person name="Akiyama K."/>
            <person name="Satou M."/>
            <person name="Toyoda T."/>
            <person name="Konagaya A."/>
            <person name="Carninci P."/>
            <person name="Kawai J."/>
            <person name="Hayashizaki Y."/>
            <person name="Shinozaki K."/>
        </authorList>
    </citation>
    <scope>NUCLEOTIDE SEQUENCE [LARGE SCALE MRNA]</scope>
    <source>
        <strain>cv. Columbia</strain>
    </source>
</reference>
<reference key="4">
    <citation type="journal article" date="2006" name="Proc. Natl. Acad. Sci. U.S.A.">
        <title>Functional identification of an Arabidopsis pectin biosynthetic homogalacturonan galacturonosyltransferase.</title>
        <authorList>
            <person name="Sterling J.D."/>
            <person name="Atmodjo M.A."/>
            <person name="Inwood S.E."/>
            <person name="Kumar Kolli V.S."/>
            <person name="Quigley H.F."/>
            <person name="Hahn M.G."/>
            <person name="Mohnen D."/>
        </authorList>
    </citation>
    <scope>GENE FAMILY</scope>
    <scope>NOMENCLATURE</scope>
</reference>
<reference key="5">
    <citation type="journal article" date="2009" name="Mol. Plant">
        <title>Arabidopsis thaliana T-DNA mutants implicate GAUT genes in the biosynthesis of pectin and xylan in cell walls and seed testa.</title>
        <authorList>
            <person name="Caffall K.H."/>
            <person name="Pattathil S."/>
            <person name="Phillips S.E."/>
            <person name="Hahn M.G."/>
            <person name="Mohnen D."/>
        </authorList>
    </citation>
    <scope>TISSUE SPECIFICITY</scope>
    <scope>DISRUPTION PHENOTYPE</scope>
</reference>
<gene>
    <name type="primary">GAUT3</name>
    <name type="ordered locus">At4g38270</name>
    <name type="ORF">F22I13.40</name>
</gene>
<name>GAUT3_ARATH</name>
<dbReference type="EC" id="2.4.1.-"/>
<dbReference type="EMBL" id="AL035539">
    <property type="protein sequence ID" value="CAB37483.1"/>
    <property type="status" value="ALT_SEQ"/>
    <property type="molecule type" value="Genomic_DNA"/>
</dbReference>
<dbReference type="EMBL" id="AL161593">
    <property type="protein sequence ID" value="CAB80492.1"/>
    <property type="status" value="ALT_SEQ"/>
    <property type="molecule type" value="Genomic_DNA"/>
</dbReference>
<dbReference type="EMBL" id="CP002687">
    <property type="protein sequence ID" value="AEE86907.1"/>
    <property type="molecule type" value="Genomic_DNA"/>
</dbReference>
<dbReference type="EMBL" id="AK228767">
    <property type="protein sequence ID" value="BAF00667.1"/>
    <property type="molecule type" value="mRNA"/>
</dbReference>
<dbReference type="PIR" id="T05655">
    <property type="entry name" value="T05655"/>
</dbReference>
<dbReference type="RefSeq" id="NP_195540.2">
    <molecule id="Q0WQD2-1"/>
    <property type="nucleotide sequence ID" value="NM_119989.5"/>
</dbReference>
<dbReference type="SMR" id="Q0WQD2"/>
<dbReference type="BioGRID" id="15264">
    <property type="interactions" value="2"/>
</dbReference>
<dbReference type="FunCoup" id="Q0WQD2">
    <property type="interactions" value="1243"/>
</dbReference>
<dbReference type="STRING" id="3702.Q0WQD2"/>
<dbReference type="CAZy" id="GT8">
    <property type="family name" value="Glycosyltransferase Family 8"/>
</dbReference>
<dbReference type="GlyCosmos" id="Q0WQD2">
    <property type="glycosylation" value="10 sites, No reported glycans"/>
</dbReference>
<dbReference type="GlyGen" id="Q0WQD2">
    <property type="glycosylation" value="10 sites"/>
</dbReference>
<dbReference type="PaxDb" id="3702-AT4G38270.1"/>
<dbReference type="ProteomicsDB" id="222161">
    <molecule id="Q0WQD2-1"/>
</dbReference>
<dbReference type="EnsemblPlants" id="AT4G38270.1">
    <molecule id="Q0WQD2-1"/>
    <property type="protein sequence ID" value="AT4G38270.1"/>
    <property type="gene ID" value="AT4G38270"/>
</dbReference>
<dbReference type="GeneID" id="829984"/>
<dbReference type="Gramene" id="AT4G38270.1">
    <molecule id="Q0WQD2-1"/>
    <property type="protein sequence ID" value="AT4G38270.1"/>
    <property type="gene ID" value="AT4G38270"/>
</dbReference>
<dbReference type="KEGG" id="ath:AT4G38270"/>
<dbReference type="Araport" id="AT4G38270"/>
<dbReference type="TAIR" id="AT4G38270">
    <property type="gene designation" value="GAUT3"/>
</dbReference>
<dbReference type="eggNOG" id="ENOG502QREV">
    <property type="taxonomic scope" value="Eukaryota"/>
</dbReference>
<dbReference type="InParanoid" id="Q0WQD2"/>
<dbReference type="OMA" id="MTGIYHY"/>
<dbReference type="UniPathway" id="UPA00845"/>
<dbReference type="PRO" id="PR:Q0WQD2"/>
<dbReference type="Proteomes" id="UP000006548">
    <property type="component" value="Chromosome 4"/>
</dbReference>
<dbReference type="ExpressionAtlas" id="Q0WQD2">
    <property type="expression patterns" value="baseline and differential"/>
</dbReference>
<dbReference type="GO" id="GO:0005768">
    <property type="term" value="C:endosome"/>
    <property type="evidence" value="ECO:0007005"/>
    <property type="project" value="TAIR"/>
</dbReference>
<dbReference type="GO" id="GO:0005794">
    <property type="term" value="C:Golgi apparatus"/>
    <property type="evidence" value="ECO:0007005"/>
    <property type="project" value="TAIR"/>
</dbReference>
<dbReference type="GO" id="GO:0005797">
    <property type="term" value="C:Golgi medial cisterna"/>
    <property type="evidence" value="ECO:0007005"/>
    <property type="project" value="TAIR"/>
</dbReference>
<dbReference type="GO" id="GO:0000139">
    <property type="term" value="C:Golgi membrane"/>
    <property type="evidence" value="ECO:0007669"/>
    <property type="project" value="UniProtKB-SubCell"/>
</dbReference>
<dbReference type="GO" id="GO:0000325">
    <property type="term" value="C:plant-type vacuole"/>
    <property type="evidence" value="ECO:0007005"/>
    <property type="project" value="TAIR"/>
</dbReference>
<dbReference type="GO" id="GO:0005802">
    <property type="term" value="C:trans-Golgi network"/>
    <property type="evidence" value="ECO:0007005"/>
    <property type="project" value="TAIR"/>
</dbReference>
<dbReference type="GO" id="GO:0047262">
    <property type="term" value="F:polygalacturonate 4-alpha-galacturonosyltransferase activity"/>
    <property type="evidence" value="ECO:0000250"/>
    <property type="project" value="TAIR"/>
</dbReference>
<dbReference type="GO" id="GO:0071555">
    <property type="term" value="P:cell wall organization"/>
    <property type="evidence" value="ECO:0007669"/>
    <property type="project" value="UniProtKB-KW"/>
</dbReference>
<dbReference type="GO" id="GO:0045489">
    <property type="term" value="P:pectin biosynthetic process"/>
    <property type="evidence" value="ECO:0007669"/>
    <property type="project" value="UniProtKB-UniPathway"/>
</dbReference>
<dbReference type="CDD" id="cd06429">
    <property type="entry name" value="GT8_like_1"/>
    <property type="match status" value="1"/>
</dbReference>
<dbReference type="Gene3D" id="3.90.550.10">
    <property type="entry name" value="Spore Coat Polysaccharide Biosynthesis Protein SpsA, Chain A"/>
    <property type="match status" value="1"/>
</dbReference>
<dbReference type="InterPro" id="IPR029993">
    <property type="entry name" value="GAUT"/>
</dbReference>
<dbReference type="InterPro" id="IPR002495">
    <property type="entry name" value="Glyco_trans_8"/>
</dbReference>
<dbReference type="InterPro" id="IPR029044">
    <property type="entry name" value="Nucleotide-diphossugar_trans"/>
</dbReference>
<dbReference type="PANTHER" id="PTHR32116:SF76">
    <property type="entry name" value="GALACTURONOSYLTRANSFERASE 3-RELATED"/>
    <property type="match status" value="1"/>
</dbReference>
<dbReference type="PANTHER" id="PTHR32116">
    <property type="entry name" value="GALACTURONOSYLTRANSFERASE 4-RELATED"/>
    <property type="match status" value="1"/>
</dbReference>
<dbReference type="Pfam" id="PF01501">
    <property type="entry name" value="Glyco_transf_8"/>
    <property type="match status" value="1"/>
</dbReference>
<dbReference type="SUPFAM" id="SSF53448">
    <property type="entry name" value="Nucleotide-diphospho-sugar transferases"/>
    <property type="match status" value="1"/>
</dbReference>
<feature type="chain" id="PRO_0000392556" description="Probable galacturonosyltransferase 3">
    <location>
        <begin position="1"/>
        <end position="680"/>
    </location>
</feature>
<feature type="topological domain" description="Cytoplasmic" evidence="2">
    <location>
        <begin position="1"/>
        <end position="6"/>
    </location>
</feature>
<feature type="transmembrane region" description="Helical; Signal-anchor for type II membrane protein" evidence="2">
    <location>
        <begin position="7"/>
        <end position="27"/>
    </location>
</feature>
<feature type="topological domain" description="Lumenal" evidence="2">
    <location>
        <begin position="28"/>
        <end position="680"/>
    </location>
</feature>
<feature type="region of interest" description="Disordered" evidence="3">
    <location>
        <begin position="118"/>
        <end position="146"/>
    </location>
</feature>
<feature type="compositionally biased region" description="Polar residues" evidence="3">
    <location>
        <begin position="130"/>
        <end position="145"/>
    </location>
</feature>
<feature type="glycosylation site" description="N-linked (GlcNAc...) asparagine" evidence="2">
    <location>
        <position position="121"/>
    </location>
</feature>
<feature type="glycosylation site" description="N-linked (GlcNAc...) asparagine" evidence="2">
    <location>
        <position position="128"/>
    </location>
</feature>
<feature type="glycosylation site" description="N-linked (GlcNAc...) asparagine" evidence="2">
    <location>
        <position position="135"/>
    </location>
</feature>
<feature type="glycosylation site" description="N-linked (GlcNAc...) asparagine" evidence="2">
    <location>
        <position position="239"/>
    </location>
</feature>
<feature type="glycosylation site" description="N-linked (GlcNAc...) asparagine" evidence="2">
    <location>
        <position position="386"/>
    </location>
</feature>
<feature type="glycosylation site" description="N-linked (GlcNAc...) asparagine" evidence="2">
    <location>
        <position position="438"/>
    </location>
</feature>
<feature type="glycosylation site" description="N-linked (GlcNAc...) asparagine" evidence="2">
    <location>
        <position position="545"/>
    </location>
</feature>
<feature type="glycosylation site" description="N-linked (GlcNAc...) asparagine" evidence="2">
    <location>
        <position position="578"/>
    </location>
</feature>
<feature type="glycosylation site" description="N-linked (GlcNAc...) asparagine" evidence="2">
    <location>
        <position position="610"/>
    </location>
</feature>
<feature type="glycosylation site" description="N-linked (GlcNAc...) asparagine" evidence="2">
    <location>
        <position position="631"/>
    </location>
</feature>
<feature type="sequence conflict" description="In Ref. 3; BAF00667." evidence="5" ref="3">
    <original>A</original>
    <variation>V</variation>
    <location>
        <position position="515"/>
    </location>
</feature>
<proteinExistence type="evidence at transcript level"/>
<protein>
    <recommendedName>
        <fullName>Probable galacturonosyltransferase 3</fullName>
        <ecNumber>2.4.1.-</ecNumber>
    </recommendedName>
</protein>